<gene>
    <name type="primary">hrp1</name>
    <name type="ordered locus">Rv2626c</name>
</gene>
<comment type="function">
    <text>Unlike some other CBS-domain containing proteins does not seem to bind AMP.</text>
</comment>
<comment type="subunit">
    <text evidence="6 10">Homodimer. Forms an SDS-resistant dimer that requires Cys-136 for SDS-resistance.</text>
</comment>
<comment type="subcellular location">
    <subcellularLocation>
        <location evidence="10">Secreted</location>
    </subcellularLocation>
    <text>Not seen to be associated with the cell wall.</text>
</comment>
<comment type="induction">
    <text evidence="2 3 4 5 8 9">A member of the dormancy regulon. Induced in response to reduced oxygen tension (hypoxia), low levels of nitric oxide (NO) and carbon monoxide (CO). It is hoped that this regulon will give insight into the latent, or dormant phase of infection. Following a shift from stationary to anaerobic growth this protein is not seen to not be further induced (at protein level). Induced in mouse lungs at the same time that adaptive host immunity induces bacterial growth arrest; induction is dependent on interferon gamma.</text>
</comment>
<comment type="biotechnology">
    <text evidence="7">In plasmid DNA-vaccinated mice, subsequent challenge with this protein induces positive levels of antigen-specific IFN-gamma and IL-2, indicating this might be a good vaccine candidate.</text>
</comment>
<comment type="miscellaneous">
    <text>Has been detected extracellularly but no signal sequence is predicted by bioinformatic programs.</text>
</comment>
<proteinExistence type="evidence at protein level"/>
<accession>P9WJA3</accession>
<accession>L0TBT6</accession>
<accession>O06186</accession>
<accession>Q7D6V4</accession>
<keyword id="KW-0002">3D-structure</keyword>
<keyword id="KW-0129">CBS domain</keyword>
<keyword id="KW-1015">Disulfide bond</keyword>
<keyword id="KW-0479">Metal-binding</keyword>
<keyword id="KW-1185">Reference proteome</keyword>
<keyword id="KW-0677">Repeat</keyword>
<keyword id="KW-0964">Secreted</keyword>
<keyword id="KW-0862">Zinc</keyword>
<sequence length="143" mass="15518">MTTARDIMNAGVTCVGEHETLTAAAQYMREHDIGALPICGDDDRLHGMLTDRDIVIKGLAAGLDPNTATAGELARDSIYYVDANASIQEMLNVMEEHQVRRVPVISEHRLVGIVTEADIARHLPEHAIVQFVKAICSPMALAS</sequence>
<reference key="1">
    <citation type="journal article" date="1998" name="Nature">
        <title>Deciphering the biology of Mycobacterium tuberculosis from the complete genome sequence.</title>
        <authorList>
            <person name="Cole S.T."/>
            <person name="Brosch R."/>
            <person name="Parkhill J."/>
            <person name="Garnier T."/>
            <person name="Churcher C.M."/>
            <person name="Harris D.E."/>
            <person name="Gordon S.V."/>
            <person name="Eiglmeier K."/>
            <person name="Gas S."/>
            <person name="Barry C.E. III"/>
            <person name="Tekaia F."/>
            <person name="Badcock K."/>
            <person name="Basham D."/>
            <person name="Brown D."/>
            <person name="Chillingworth T."/>
            <person name="Connor R."/>
            <person name="Davies R.M."/>
            <person name="Devlin K."/>
            <person name="Feltwell T."/>
            <person name="Gentles S."/>
            <person name="Hamlin N."/>
            <person name="Holroyd S."/>
            <person name="Hornsby T."/>
            <person name="Jagels K."/>
            <person name="Krogh A."/>
            <person name="McLean J."/>
            <person name="Moule S."/>
            <person name="Murphy L.D."/>
            <person name="Oliver S."/>
            <person name="Osborne J."/>
            <person name="Quail M.A."/>
            <person name="Rajandream M.A."/>
            <person name="Rogers J."/>
            <person name="Rutter S."/>
            <person name="Seeger K."/>
            <person name="Skelton S."/>
            <person name="Squares S."/>
            <person name="Squares R."/>
            <person name="Sulston J.E."/>
            <person name="Taylor K."/>
            <person name="Whitehead S."/>
            <person name="Barrell B.G."/>
        </authorList>
    </citation>
    <scope>NUCLEOTIDE SEQUENCE [LARGE SCALE GENOMIC DNA]</scope>
    <source>
        <strain>ATCC 25618 / H37Rv</strain>
    </source>
</reference>
<reference key="2">
    <citation type="journal article" date="2001" name="Proc. Natl. Acad. Sci. U.S.A.">
        <title>Regulation of the Mycobacterium tuberculosis hypoxic response gene encoding alpha -crystallin.</title>
        <authorList>
            <person name="Sherman D.R."/>
            <person name="Voskuil M."/>
            <person name="Schnappinger D."/>
            <person name="Liao R."/>
            <person name="Harrell M.I."/>
            <person name="Schoolnik G.K."/>
        </authorList>
    </citation>
    <scope>INDUCTION BY HYPOXIA</scope>
    <source>
        <strain>ATCC 25618 / H37Rv</strain>
    </source>
</reference>
<reference key="3">
    <citation type="journal article" date="2002" name="J. Bacteriol.">
        <title>Hypoxic response of Mycobacterium tuberculosis studied by metabolic labeling and proteome analysis of cellular and extracellular proteins.</title>
        <authorList>
            <person name="Rosenkrands I."/>
            <person name="Slayden R.A."/>
            <person name="Crawford J."/>
            <person name="Aagaard C."/>
            <person name="Barry C.E. III"/>
            <person name="Andersen P."/>
        </authorList>
    </citation>
    <scope>IDENTIFICATION BY MASS SPECTROMETRY</scope>
    <scope>INDUCTION BY HYPOXIA</scope>
    <source>
        <strain>ATCC 25618 / H37Rv</strain>
    </source>
</reference>
<reference key="4">
    <citation type="journal article" date="2003" name="J. Exp. Med.">
        <title>Inhibition of respiration by nitric oxide induces a Mycobacterium tuberculosis dormancy program.</title>
        <authorList>
            <person name="Voskuil M.I."/>
            <person name="Schnappinger D."/>
            <person name="Visconti K.C."/>
            <person name="Harrell M.I."/>
            <person name="Dolganov G.M."/>
            <person name="Sherman D.R."/>
            <person name="Schoolnik G.K."/>
        </authorList>
    </citation>
    <scope>INDUCTION BY NITRIC OXIDE (NO); BY HYPOXIA; IN MOUSE MODEL AND DORMANCY REGULON</scope>
    <source>
        <strain>ATCC 25618 / H37Rv</strain>
    </source>
</reference>
<reference key="5">
    <citation type="journal article" date="2003" name="Proc. Natl. Acad. Sci. U.S.A.">
        <title>Expression of Th1-mediated immunity in mouse lungs induces a Mycobacterium tuberculosis transcription pattern characteristic of nonreplicating persistence.</title>
        <authorList>
            <person name="Shi L."/>
            <person name="Jung Y.J."/>
            <person name="Tyagi S."/>
            <person name="Gennaro M.L."/>
            <person name="North R.J."/>
        </authorList>
    </citation>
    <scope>INDUCTION BY HOST IMMUNITY</scope>
    <source>
        <strain>ATCC 25618 / H37Rv</strain>
    </source>
</reference>
<reference key="6">
    <citation type="journal article" date="2004" name="Microbiology">
        <title>Comparative proteome analysis of Mycobacterium tuberculosis grown under aerobic and anaerobic conditions.</title>
        <authorList>
            <person name="Starck J."/>
            <person name="Kallenius G."/>
            <person name="Marklund B.I."/>
            <person name="Andersson D.I."/>
            <person name="Akerlund T."/>
        </authorList>
    </citation>
    <scope>STATIONARY PHASE INDUCTION</scope>
    <scope>IDENTIFICATION BY MASS SPECTROMETRY</scope>
    <source>
        <strain>S-02293 Harlingen</strain>
    </source>
</reference>
<reference key="7">
    <citation type="journal article" date="2005" name="Acta Crystallogr. F">
        <title>Crystallization of a protein using dehydration without a precipitant.</title>
        <authorList>
            <person name="Sharpe M.L."/>
            <person name="Baker E.N."/>
            <person name="Lott J.S."/>
        </authorList>
    </citation>
    <scope>SUBUNIT</scope>
    <scope>PRELIMINARY CRYSTALLOGRAPHY</scope>
    <source>
        <strain>ATCC 25618 / H37Rv</strain>
    </source>
</reference>
<reference key="8">
    <citation type="journal article" date="2007" name="Infect. Immun.">
        <title>Immunogenicity of eight dormancy regulon-encoded proteins of Mycobacterium tuberculosis in DNA-vaccinated and tuberculosis-infected mice.</title>
        <authorList>
            <person name="Roupie V."/>
            <person name="Romano M."/>
            <person name="Zhang L."/>
            <person name="Korf H."/>
            <person name="Lin M.Y."/>
            <person name="Franken K.L."/>
            <person name="Ottenhoff T.H."/>
            <person name="Klein M.R."/>
            <person name="Huygen K."/>
        </authorList>
    </citation>
    <scope>BIOTECHNOLOGY</scope>
    <source>
        <strain>ATCC 25618 / H37Rv</strain>
    </source>
</reference>
<reference key="9">
    <citation type="journal article" date="2008" name="Cell Host Microbe">
        <title>Mycobacterium tuberculosis senses host-derived carbon monoxide during macrophage infection.</title>
        <authorList>
            <person name="Shiloh M.U."/>
            <person name="Manzanillo P."/>
            <person name="Cox J.S."/>
        </authorList>
    </citation>
    <scope>INDUCTION BY CARBON MONOXIDE (CO)</scope>
    <source>
        <strain>ATCC 35801 / TMC 107 / Erdman</strain>
    </source>
</reference>
<reference key="10">
    <citation type="journal article" date="2008" name="J. Biol. Chem.">
        <title>Heme oxygenase-1-derived carbon monoxide induces the Mycobacterium tuberculosis dormancy regulon.</title>
        <authorList>
            <person name="Kumar A."/>
            <person name="Deshane J.S."/>
            <person name="Crossman D.K."/>
            <person name="Bolisetty S."/>
            <person name="Yan B.S."/>
            <person name="Kramnik I."/>
            <person name="Agarwal A."/>
            <person name="Steyn A.J."/>
        </authorList>
    </citation>
    <scope>INDUCTION BY CARBON MONOXIDE (CO)</scope>
    <scope>DORMANCY REGULON</scope>
    <source>
        <strain>ATCC 25618 / H37Rv</strain>
    </source>
</reference>
<reference key="11">
    <citation type="journal article" date="2011" name="Mol. Cell. Proteomics">
        <title>Proteogenomic analysis of Mycobacterium tuberculosis by high resolution mass spectrometry.</title>
        <authorList>
            <person name="Kelkar D.S."/>
            <person name="Kumar D."/>
            <person name="Kumar P."/>
            <person name="Balakrishnan L."/>
            <person name="Muthusamy B."/>
            <person name="Yadav A.K."/>
            <person name="Shrivastava P."/>
            <person name="Marimuthu A."/>
            <person name="Anand S."/>
            <person name="Sundaram H."/>
            <person name="Kingsbury R."/>
            <person name="Harsha H.C."/>
            <person name="Nair B."/>
            <person name="Prasad T.S."/>
            <person name="Chauhan D.S."/>
            <person name="Katoch K."/>
            <person name="Katoch V.M."/>
            <person name="Kumar P."/>
            <person name="Chaerkady R."/>
            <person name="Ramachandran S."/>
            <person name="Dash D."/>
            <person name="Pandey A."/>
        </authorList>
    </citation>
    <scope>IDENTIFICATION BY MASS SPECTROMETRY [LARGE SCALE ANALYSIS]</scope>
    <source>
        <strain>ATCC 25618 / H37Rv</strain>
    </source>
</reference>
<reference key="12">
    <citation type="journal article" date="2008" name="J. Mol. Biol.">
        <title>The structure and unusual protein chemistry of hypoxic response protein 1, a latency antigen and highly expressed member of the DosR regulon in Mycobacterium tuberculosis.</title>
        <authorList>
            <person name="Sharpe M.L."/>
            <person name="Gao C."/>
            <person name="Kendall S.L."/>
            <person name="Baker E.N."/>
            <person name="Lott J.S."/>
        </authorList>
    </citation>
    <scope>X-RAY CRYSTALLOGRAPHY (1.5 ANGSTROMS) OF 1-127</scope>
    <scope>SUBUNIT</scope>
    <scope>SUBCELLULAR LOCATION</scope>
    <scope>MUTAGENESIS OF CYS-14; CYS-39 AND CYS-136</scope>
    <source>
        <strain>ATCC 25618 / H37Rv</strain>
    </source>
</reference>
<dbReference type="EMBL" id="AL123456">
    <property type="protein sequence ID" value="CCP45424.1"/>
    <property type="molecule type" value="Genomic_DNA"/>
</dbReference>
<dbReference type="PIR" id="A70573">
    <property type="entry name" value="A70573"/>
</dbReference>
<dbReference type="RefSeq" id="NP_217142.1">
    <property type="nucleotide sequence ID" value="NC_000962.3"/>
</dbReference>
<dbReference type="RefSeq" id="WP_003413598.1">
    <property type="nucleotide sequence ID" value="NZ_NVQJ01000075.1"/>
</dbReference>
<dbReference type="PDB" id="1XKF">
    <property type="method" value="X-ray"/>
    <property type="resolution" value="1.90 A"/>
    <property type="chains" value="A/B=1-127"/>
</dbReference>
<dbReference type="PDB" id="1Y5H">
    <property type="method" value="X-ray"/>
    <property type="resolution" value="1.50 A"/>
    <property type="chains" value="A/B=1-127"/>
</dbReference>
<dbReference type="PDBsum" id="1XKF"/>
<dbReference type="PDBsum" id="1Y5H"/>
<dbReference type="SMR" id="P9WJA3"/>
<dbReference type="STRING" id="83332.Rv2626c"/>
<dbReference type="PaxDb" id="83332-Rv2626c"/>
<dbReference type="DNASU" id="888576"/>
<dbReference type="GeneID" id="45426630"/>
<dbReference type="GeneID" id="888576"/>
<dbReference type="KEGG" id="mtu:Rv2626c"/>
<dbReference type="KEGG" id="mtv:RVBD_2626c"/>
<dbReference type="TubercuList" id="Rv2626c"/>
<dbReference type="eggNOG" id="COG0517">
    <property type="taxonomic scope" value="Bacteria"/>
</dbReference>
<dbReference type="InParanoid" id="P9WJA3"/>
<dbReference type="OrthoDB" id="9789996at2"/>
<dbReference type="PhylomeDB" id="P9WJA3"/>
<dbReference type="EvolutionaryTrace" id="P9WJA3"/>
<dbReference type="PHI-base" id="PHI:7581"/>
<dbReference type="Proteomes" id="UP000001584">
    <property type="component" value="Chromosome"/>
</dbReference>
<dbReference type="GO" id="GO:0005829">
    <property type="term" value="C:cytosol"/>
    <property type="evidence" value="ECO:0007005"/>
    <property type="project" value="MTBBASE"/>
</dbReference>
<dbReference type="GO" id="GO:0005576">
    <property type="term" value="C:extracellular region"/>
    <property type="evidence" value="ECO:0007669"/>
    <property type="project" value="UniProtKB-SubCell"/>
</dbReference>
<dbReference type="GO" id="GO:0009274">
    <property type="term" value="C:peptidoglycan-based cell wall"/>
    <property type="evidence" value="ECO:0007005"/>
    <property type="project" value="MTBBASE"/>
</dbReference>
<dbReference type="GO" id="GO:0005886">
    <property type="term" value="C:plasma membrane"/>
    <property type="evidence" value="ECO:0007005"/>
    <property type="project" value="MTBBASE"/>
</dbReference>
<dbReference type="GO" id="GO:0046872">
    <property type="term" value="F:metal ion binding"/>
    <property type="evidence" value="ECO:0007669"/>
    <property type="project" value="UniProtKB-KW"/>
</dbReference>
<dbReference type="GO" id="GO:0001666">
    <property type="term" value="P:response to hypoxia"/>
    <property type="evidence" value="ECO:0000314"/>
    <property type="project" value="MTBBASE"/>
</dbReference>
<dbReference type="GO" id="GO:0052553">
    <property type="term" value="P:symbiont-mediated perturbation of host immune response"/>
    <property type="evidence" value="ECO:0000314"/>
    <property type="project" value="MTBBASE"/>
</dbReference>
<dbReference type="CDD" id="cd04622">
    <property type="entry name" value="CBS_pair_HRP1_like"/>
    <property type="match status" value="1"/>
</dbReference>
<dbReference type="Gene3D" id="3.10.580.10">
    <property type="entry name" value="CBS-domain"/>
    <property type="match status" value="1"/>
</dbReference>
<dbReference type="InterPro" id="IPR000644">
    <property type="entry name" value="CBS_dom"/>
</dbReference>
<dbReference type="InterPro" id="IPR046342">
    <property type="entry name" value="CBS_dom_sf"/>
</dbReference>
<dbReference type="InterPro" id="IPR051257">
    <property type="entry name" value="Diverse_CBS-Domain"/>
</dbReference>
<dbReference type="PANTHER" id="PTHR43080:SF2">
    <property type="entry name" value="CBS DOMAIN-CONTAINING PROTEIN"/>
    <property type="match status" value="1"/>
</dbReference>
<dbReference type="PANTHER" id="PTHR43080">
    <property type="entry name" value="CBS DOMAIN-CONTAINING PROTEIN CBSX3, MITOCHONDRIAL"/>
    <property type="match status" value="1"/>
</dbReference>
<dbReference type="Pfam" id="PF00571">
    <property type="entry name" value="CBS"/>
    <property type="match status" value="2"/>
</dbReference>
<dbReference type="SMART" id="SM00116">
    <property type="entry name" value="CBS"/>
    <property type="match status" value="2"/>
</dbReference>
<dbReference type="SUPFAM" id="SSF54631">
    <property type="entry name" value="CBS-domain pair"/>
    <property type="match status" value="1"/>
</dbReference>
<dbReference type="PROSITE" id="PS51371">
    <property type="entry name" value="CBS"/>
    <property type="match status" value="2"/>
</dbReference>
<name>HRP1_MYCTU</name>
<protein>
    <recommendedName>
        <fullName>Hypoxic response protein 1</fullName>
        <shortName>HRP1</shortName>
    </recommendedName>
</protein>
<evidence type="ECO:0000255" key="1">
    <source>
        <dbReference type="PROSITE-ProRule" id="PRU00703"/>
    </source>
</evidence>
<evidence type="ECO:0000269" key="2">
    <source>
    </source>
</evidence>
<evidence type="ECO:0000269" key="3">
    <source>
    </source>
</evidence>
<evidence type="ECO:0000269" key="4">
    <source>
    </source>
</evidence>
<evidence type="ECO:0000269" key="5">
    <source>
    </source>
</evidence>
<evidence type="ECO:0000269" key="6">
    <source>
    </source>
</evidence>
<evidence type="ECO:0000269" key="7">
    <source>
    </source>
</evidence>
<evidence type="ECO:0000269" key="8">
    <source>
    </source>
</evidence>
<evidence type="ECO:0000269" key="9">
    <source>
    </source>
</evidence>
<evidence type="ECO:0000269" key="10">
    <source>
    </source>
</evidence>
<evidence type="ECO:0007829" key="11">
    <source>
        <dbReference type="PDB" id="1Y5H"/>
    </source>
</evidence>
<feature type="chain" id="PRO_0000392622" description="Hypoxic response protein 1">
    <location>
        <begin position="1"/>
        <end position="143"/>
    </location>
</feature>
<feature type="domain" description="CBS 1" evidence="1">
    <location>
        <begin position="8"/>
        <end position="65"/>
    </location>
</feature>
<feature type="domain" description="CBS 2" evidence="1">
    <location>
        <begin position="73"/>
        <end position="131"/>
    </location>
</feature>
<feature type="binding site">
    <location>
        <position position="97"/>
    </location>
    <ligand>
        <name>Zn(2+)</name>
        <dbReference type="ChEBI" id="CHEBI:29105"/>
        <label>1</label>
    </ligand>
</feature>
<feature type="binding site">
    <location>
        <position position="122"/>
    </location>
    <ligand>
        <name>Zn(2+)</name>
        <dbReference type="ChEBI" id="CHEBI:29105"/>
        <label>2</label>
    </ligand>
</feature>
<feature type="disulfide bond">
    <location>
        <begin position="14"/>
        <end position="39"/>
    </location>
</feature>
<feature type="disulfide bond" description="Interchain">
    <location>
        <position position="136"/>
    </location>
</feature>
<feature type="mutagenesis site" description="Forms less stable dimer." evidence="10">
    <original>C</original>
    <variation>A</variation>
    <location>
        <position position="14"/>
    </location>
</feature>
<feature type="mutagenesis site" description="Forms less stable dimer." evidence="10">
    <original>C</original>
    <variation>A</variation>
    <location>
        <position position="39"/>
    </location>
</feature>
<feature type="mutagenesis site" description="No longer forms SDS-resistant dimer.">
    <location>
        <begin position="128"/>
        <end position="143"/>
    </location>
</feature>
<feature type="mutagenesis site" description="No longer forms SDS-resistant dimer." evidence="10">
    <original>C</original>
    <variation>A</variation>
    <location>
        <position position="136"/>
    </location>
</feature>
<feature type="helix" evidence="11">
    <location>
        <begin position="4"/>
        <end position="7"/>
    </location>
</feature>
<feature type="strand" evidence="11">
    <location>
        <begin position="8"/>
        <end position="10"/>
    </location>
</feature>
<feature type="helix" evidence="11">
    <location>
        <begin position="21"/>
        <end position="31"/>
    </location>
</feature>
<feature type="strand" evidence="11">
    <location>
        <begin position="34"/>
        <end position="39"/>
    </location>
</feature>
<feature type="helix" evidence="11">
    <location>
        <begin position="41"/>
        <end position="43"/>
    </location>
</feature>
<feature type="strand" evidence="11">
    <location>
        <begin position="44"/>
        <end position="50"/>
    </location>
</feature>
<feature type="helix" evidence="11">
    <location>
        <begin position="51"/>
        <end position="56"/>
    </location>
</feature>
<feature type="helix" evidence="11">
    <location>
        <begin position="59"/>
        <end position="61"/>
    </location>
</feature>
<feature type="turn" evidence="11">
    <location>
        <begin position="65"/>
        <end position="67"/>
    </location>
</feature>
<feature type="helix" evidence="11">
    <location>
        <begin position="70"/>
        <end position="74"/>
    </location>
</feature>
<feature type="helix" evidence="11">
    <location>
        <begin position="87"/>
        <end position="97"/>
    </location>
</feature>
<feature type="strand" evidence="11">
    <location>
        <begin position="100"/>
        <end position="106"/>
    </location>
</feature>
<feature type="strand" evidence="11">
    <location>
        <begin position="109"/>
        <end position="115"/>
    </location>
</feature>
<feature type="helix" evidence="11">
    <location>
        <begin position="116"/>
        <end position="121"/>
    </location>
</feature>
<organism>
    <name type="scientific">Mycobacterium tuberculosis (strain ATCC 25618 / H37Rv)</name>
    <dbReference type="NCBI Taxonomy" id="83332"/>
    <lineage>
        <taxon>Bacteria</taxon>
        <taxon>Bacillati</taxon>
        <taxon>Actinomycetota</taxon>
        <taxon>Actinomycetes</taxon>
        <taxon>Mycobacteriales</taxon>
        <taxon>Mycobacteriaceae</taxon>
        <taxon>Mycobacterium</taxon>
        <taxon>Mycobacterium tuberculosis complex</taxon>
    </lineage>
</organism>